<protein>
    <recommendedName>
        <fullName evidence="1">Chorismate synthase 2</fullName>
        <shortName evidence="1">CS 2</shortName>
        <ecNumber evidence="1">4.2.3.5</ecNumber>
    </recommendedName>
    <alternativeName>
        <fullName evidence="1">5-enolpyruvylshikimate-3-phosphate phospholyase 2</fullName>
    </alternativeName>
</protein>
<gene>
    <name evidence="1" type="primary">aroC2</name>
    <name type="ordered locus">BT9727_2697</name>
</gene>
<evidence type="ECO:0000255" key="1">
    <source>
        <dbReference type="HAMAP-Rule" id="MF_00300"/>
    </source>
</evidence>
<reference key="1">
    <citation type="journal article" date="2006" name="J. Bacteriol.">
        <title>Pathogenomic sequence analysis of Bacillus cereus and Bacillus thuringiensis isolates closely related to Bacillus anthracis.</title>
        <authorList>
            <person name="Han C.S."/>
            <person name="Xie G."/>
            <person name="Challacombe J.F."/>
            <person name="Altherr M.R."/>
            <person name="Bhotika S.S."/>
            <person name="Bruce D."/>
            <person name="Campbell C.S."/>
            <person name="Campbell M.L."/>
            <person name="Chen J."/>
            <person name="Chertkov O."/>
            <person name="Cleland C."/>
            <person name="Dimitrijevic M."/>
            <person name="Doggett N.A."/>
            <person name="Fawcett J.J."/>
            <person name="Glavina T."/>
            <person name="Goodwin L.A."/>
            <person name="Hill K.K."/>
            <person name="Hitchcock P."/>
            <person name="Jackson P.J."/>
            <person name="Keim P."/>
            <person name="Kewalramani A.R."/>
            <person name="Longmire J."/>
            <person name="Lucas S."/>
            <person name="Malfatti S."/>
            <person name="McMurry K."/>
            <person name="Meincke L.J."/>
            <person name="Misra M."/>
            <person name="Moseman B.L."/>
            <person name="Mundt M."/>
            <person name="Munk A.C."/>
            <person name="Okinaka R.T."/>
            <person name="Parson-Quintana B."/>
            <person name="Reilly L.P."/>
            <person name="Richardson P."/>
            <person name="Robinson D.L."/>
            <person name="Rubin E."/>
            <person name="Saunders E."/>
            <person name="Tapia R."/>
            <person name="Tesmer J.G."/>
            <person name="Thayer N."/>
            <person name="Thompson L.S."/>
            <person name="Tice H."/>
            <person name="Ticknor L.O."/>
            <person name="Wills P.L."/>
            <person name="Brettin T.S."/>
            <person name="Gilna P."/>
        </authorList>
    </citation>
    <scope>NUCLEOTIDE SEQUENCE [LARGE SCALE GENOMIC DNA]</scope>
    <source>
        <strain>97-27</strain>
    </source>
</reference>
<comment type="function">
    <text evidence="1">Catalyzes the anti-1,4-elimination of the C-3 phosphate and the C-6 proR hydrogen from 5-enolpyruvylshikimate-3-phosphate (EPSP) to yield chorismate, which is the branch point compound that serves as the starting substrate for the three terminal pathways of aromatic amino acid biosynthesis. This reaction introduces a second double bond into the aromatic ring system.</text>
</comment>
<comment type="catalytic activity">
    <reaction evidence="1">
        <text>5-O-(1-carboxyvinyl)-3-phosphoshikimate = chorismate + phosphate</text>
        <dbReference type="Rhea" id="RHEA:21020"/>
        <dbReference type="ChEBI" id="CHEBI:29748"/>
        <dbReference type="ChEBI" id="CHEBI:43474"/>
        <dbReference type="ChEBI" id="CHEBI:57701"/>
        <dbReference type="EC" id="4.2.3.5"/>
    </reaction>
</comment>
<comment type="cofactor">
    <cofactor evidence="1">
        <name>FMNH2</name>
        <dbReference type="ChEBI" id="CHEBI:57618"/>
    </cofactor>
    <text evidence="1">Reduced FMN (FMNH(2)).</text>
</comment>
<comment type="pathway">
    <text evidence="1">Metabolic intermediate biosynthesis; chorismate biosynthesis; chorismate from D-erythrose 4-phosphate and phosphoenolpyruvate: step 7/7.</text>
</comment>
<comment type="subunit">
    <text evidence="1">Homotetramer.</text>
</comment>
<comment type="similarity">
    <text evidence="1">Belongs to the chorismate synthase family.</text>
</comment>
<accession>Q6HHF5</accession>
<keyword id="KW-0028">Amino-acid biosynthesis</keyword>
<keyword id="KW-0057">Aromatic amino acid biosynthesis</keyword>
<keyword id="KW-0274">FAD</keyword>
<keyword id="KW-0285">Flavoprotein</keyword>
<keyword id="KW-0288">FMN</keyword>
<keyword id="KW-0456">Lyase</keyword>
<keyword id="KW-0521">NADP</keyword>
<proteinExistence type="inferred from homology"/>
<sequence>MRYITAGESHGPQLTVILEGVPAGLTLAAEHINKELLRRQKGHGRGRRMQIETDTVEIVSGVRHGMTLGSPITLIVKNDDFKHWTKVMGAEPISEKESKEMKRTITKPRPGHADLNGAIKYGHRDIRNVLERSSARETTVRVAAGAVAKQILKELGVEIAGHVLEIGGVKAKHISNLSIEEIQIITENSPVRCLDKTVEQEMMDAIDNAKSSGDSIGGIVEVIAEGMPIGVGSYVHYDRKLDAKLAGAIMSINAFKGAEIGVGFEAARQPGSKVHDEILWDEEQGYTRKTNNAGGLEGGMTTGMPIVVRGVMKPIPTLYKPLASVDIDTKEAFQASIERSDSCAVPAAGVVAESVVAWELAHALVEQFGKDRMELIQQNITQHNKYAKEF</sequence>
<dbReference type="EC" id="4.2.3.5" evidence="1"/>
<dbReference type="EMBL" id="AE017355">
    <property type="protein sequence ID" value="AAT61253.1"/>
    <property type="molecule type" value="Genomic_DNA"/>
</dbReference>
<dbReference type="RefSeq" id="YP_037021.1">
    <property type="nucleotide sequence ID" value="NC_005957.1"/>
</dbReference>
<dbReference type="SMR" id="Q6HHF5"/>
<dbReference type="KEGG" id="btk:BT9727_2697"/>
<dbReference type="PATRIC" id="fig|281309.8.peg.2863"/>
<dbReference type="HOGENOM" id="CLU_034547_2_0_9"/>
<dbReference type="UniPathway" id="UPA00053">
    <property type="reaction ID" value="UER00090"/>
</dbReference>
<dbReference type="Proteomes" id="UP000001301">
    <property type="component" value="Chromosome"/>
</dbReference>
<dbReference type="GO" id="GO:0005829">
    <property type="term" value="C:cytosol"/>
    <property type="evidence" value="ECO:0007669"/>
    <property type="project" value="TreeGrafter"/>
</dbReference>
<dbReference type="GO" id="GO:0004107">
    <property type="term" value="F:chorismate synthase activity"/>
    <property type="evidence" value="ECO:0007669"/>
    <property type="project" value="UniProtKB-UniRule"/>
</dbReference>
<dbReference type="GO" id="GO:0010181">
    <property type="term" value="F:FMN binding"/>
    <property type="evidence" value="ECO:0007669"/>
    <property type="project" value="TreeGrafter"/>
</dbReference>
<dbReference type="GO" id="GO:0008652">
    <property type="term" value="P:amino acid biosynthetic process"/>
    <property type="evidence" value="ECO:0007669"/>
    <property type="project" value="UniProtKB-KW"/>
</dbReference>
<dbReference type="GO" id="GO:0009073">
    <property type="term" value="P:aromatic amino acid family biosynthetic process"/>
    <property type="evidence" value="ECO:0007669"/>
    <property type="project" value="UniProtKB-KW"/>
</dbReference>
<dbReference type="GO" id="GO:0009423">
    <property type="term" value="P:chorismate biosynthetic process"/>
    <property type="evidence" value="ECO:0007669"/>
    <property type="project" value="UniProtKB-UniRule"/>
</dbReference>
<dbReference type="CDD" id="cd07304">
    <property type="entry name" value="Chorismate_synthase"/>
    <property type="match status" value="1"/>
</dbReference>
<dbReference type="FunFam" id="3.60.150.10:FF:000002">
    <property type="entry name" value="Chorismate synthase"/>
    <property type="match status" value="1"/>
</dbReference>
<dbReference type="Gene3D" id="3.60.150.10">
    <property type="entry name" value="Chorismate synthase AroC"/>
    <property type="match status" value="1"/>
</dbReference>
<dbReference type="HAMAP" id="MF_00300">
    <property type="entry name" value="Chorismate_synth"/>
    <property type="match status" value="1"/>
</dbReference>
<dbReference type="InterPro" id="IPR000453">
    <property type="entry name" value="Chorismate_synth"/>
</dbReference>
<dbReference type="InterPro" id="IPR035904">
    <property type="entry name" value="Chorismate_synth_AroC_sf"/>
</dbReference>
<dbReference type="InterPro" id="IPR020541">
    <property type="entry name" value="Chorismate_synthase_CS"/>
</dbReference>
<dbReference type="NCBIfam" id="TIGR00033">
    <property type="entry name" value="aroC"/>
    <property type="match status" value="1"/>
</dbReference>
<dbReference type="NCBIfam" id="NF003793">
    <property type="entry name" value="PRK05382.1"/>
    <property type="match status" value="1"/>
</dbReference>
<dbReference type="NCBIfam" id="NF009113">
    <property type="entry name" value="PRK12463.1"/>
    <property type="match status" value="1"/>
</dbReference>
<dbReference type="PANTHER" id="PTHR21085">
    <property type="entry name" value="CHORISMATE SYNTHASE"/>
    <property type="match status" value="1"/>
</dbReference>
<dbReference type="PANTHER" id="PTHR21085:SF0">
    <property type="entry name" value="CHORISMATE SYNTHASE"/>
    <property type="match status" value="1"/>
</dbReference>
<dbReference type="Pfam" id="PF01264">
    <property type="entry name" value="Chorismate_synt"/>
    <property type="match status" value="1"/>
</dbReference>
<dbReference type="PIRSF" id="PIRSF001456">
    <property type="entry name" value="Chorismate_synth"/>
    <property type="match status" value="1"/>
</dbReference>
<dbReference type="SUPFAM" id="SSF103263">
    <property type="entry name" value="Chorismate synthase, AroC"/>
    <property type="match status" value="1"/>
</dbReference>
<dbReference type="PROSITE" id="PS00787">
    <property type="entry name" value="CHORISMATE_SYNTHASE_1"/>
    <property type="match status" value="1"/>
</dbReference>
<dbReference type="PROSITE" id="PS00788">
    <property type="entry name" value="CHORISMATE_SYNTHASE_2"/>
    <property type="match status" value="1"/>
</dbReference>
<dbReference type="PROSITE" id="PS00789">
    <property type="entry name" value="CHORISMATE_SYNTHASE_3"/>
    <property type="match status" value="1"/>
</dbReference>
<feature type="chain" id="PRO_0000140550" description="Chorismate synthase 2">
    <location>
        <begin position="1"/>
        <end position="390"/>
    </location>
</feature>
<feature type="binding site" evidence="1">
    <location>
        <position position="39"/>
    </location>
    <ligand>
        <name>NADP(+)</name>
        <dbReference type="ChEBI" id="CHEBI:58349"/>
    </ligand>
</feature>
<feature type="binding site" evidence="1">
    <location>
        <position position="45"/>
    </location>
    <ligand>
        <name>NADP(+)</name>
        <dbReference type="ChEBI" id="CHEBI:58349"/>
    </ligand>
</feature>
<feature type="binding site" evidence="1">
    <location>
        <begin position="132"/>
        <end position="134"/>
    </location>
    <ligand>
        <name>FMN</name>
        <dbReference type="ChEBI" id="CHEBI:58210"/>
    </ligand>
</feature>
<feature type="binding site" evidence="1">
    <location>
        <begin position="253"/>
        <end position="254"/>
    </location>
    <ligand>
        <name>FMN</name>
        <dbReference type="ChEBI" id="CHEBI:58210"/>
    </ligand>
</feature>
<feature type="binding site" evidence="1">
    <location>
        <position position="298"/>
    </location>
    <ligand>
        <name>FMN</name>
        <dbReference type="ChEBI" id="CHEBI:58210"/>
    </ligand>
</feature>
<feature type="binding site" evidence="1">
    <location>
        <begin position="313"/>
        <end position="317"/>
    </location>
    <ligand>
        <name>FMN</name>
        <dbReference type="ChEBI" id="CHEBI:58210"/>
    </ligand>
</feature>
<feature type="binding site" evidence="1">
    <location>
        <position position="339"/>
    </location>
    <ligand>
        <name>FMN</name>
        <dbReference type="ChEBI" id="CHEBI:58210"/>
    </ligand>
</feature>
<organism>
    <name type="scientific">Bacillus thuringiensis subsp. konkukian (strain 97-27)</name>
    <dbReference type="NCBI Taxonomy" id="281309"/>
    <lineage>
        <taxon>Bacteria</taxon>
        <taxon>Bacillati</taxon>
        <taxon>Bacillota</taxon>
        <taxon>Bacilli</taxon>
        <taxon>Bacillales</taxon>
        <taxon>Bacillaceae</taxon>
        <taxon>Bacillus</taxon>
        <taxon>Bacillus cereus group</taxon>
    </lineage>
</organism>
<name>AROC2_BACHK</name>